<protein>
    <recommendedName>
        <fullName evidence="1">2-succinyl-6-hydroxy-2,4-cyclohexadiene-1-carboxylate synthase</fullName>
        <shortName evidence="1">SHCHC synthase</shortName>
        <ecNumber evidence="1">4.2.99.20</ecNumber>
    </recommendedName>
</protein>
<accession>Q669C8</accession>
<dbReference type="EC" id="4.2.99.20" evidence="1"/>
<dbReference type="EMBL" id="BX936398">
    <property type="protein sequence ID" value="CAH21797.1"/>
    <property type="molecule type" value="Genomic_DNA"/>
</dbReference>
<dbReference type="RefSeq" id="WP_011192655.1">
    <property type="nucleotide sequence ID" value="NC_006155.1"/>
</dbReference>
<dbReference type="SMR" id="Q669C8"/>
<dbReference type="ESTHER" id="yerpe-YPO2526">
    <property type="family name" value="MenH_SHCHC"/>
</dbReference>
<dbReference type="KEGG" id="ypo:BZ17_4079"/>
<dbReference type="KEGG" id="yps:YPTB2559"/>
<dbReference type="PATRIC" id="fig|273123.14.peg.4289"/>
<dbReference type="UniPathway" id="UPA00079"/>
<dbReference type="UniPathway" id="UPA01057">
    <property type="reaction ID" value="UER00900"/>
</dbReference>
<dbReference type="Proteomes" id="UP000001011">
    <property type="component" value="Chromosome"/>
</dbReference>
<dbReference type="GO" id="GO:0070205">
    <property type="term" value="F:2-succinyl-6-hydroxy-2,4-cyclohexadiene-1-carboxylate synthase activity"/>
    <property type="evidence" value="ECO:0007669"/>
    <property type="project" value="UniProtKB-UniRule"/>
</dbReference>
<dbReference type="GO" id="GO:0009234">
    <property type="term" value="P:menaquinone biosynthetic process"/>
    <property type="evidence" value="ECO:0007669"/>
    <property type="project" value="UniProtKB-UniRule"/>
</dbReference>
<dbReference type="Gene3D" id="3.40.50.1820">
    <property type="entry name" value="alpha/beta hydrolase"/>
    <property type="match status" value="1"/>
</dbReference>
<dbReference type="HAMAP" id="MF_01660">
    <property type="entry name" value="MenH"/>
    <property type="match status" value="1"/>
</dbReference>
<dbReference type="InterPro" id="IPR000073">
    <property type="entry name" value="AB_hydrolase_1"/>
</dbReference>
<dbReference type="InterPro" id="IPR029058">
    <property type="entry name" value="AB_hydrolase_fold"/>
</dbReference>
<dbReference type="InterPro" id="IPR022485">
    <property type="entry name" value="SHCHC_synthase_MenH"/>
</dbReference>
<dbReference type="NCBIfam" id="TIGR03695">
    <property type="entry name" value="menH_SHCHC"/>
    <property type="match status" value="1"/>
</dbReference>
<dbReference type="NCBIfam" id="NF008340">
    <property type="entry name" value="PRK11126.1"/>
    <property type="match status" value="1"/>
</dbReference>
<dbReference type="PANTHER" id="PTHR42916">
    <property type="entry name" value="2-SUCCINYL-5-ENOLPYRUVYL-6-HYDROXY-3-CYCLOHEXENE-1-CARBOXYLATE SYNTHASE"/>
    <property type="match status" value="1"/>
</dbReference>
<dbReference type="PANTHER" id="PTHR42916:SF1">
    <property type="entry name" value="PROTEIN PHYLLO, CHLOROPLASTIC"/>
    <property type="match status" value="1"/>
</dbReference>
<dbReference type="Pfam" id="PF12697">
    <property type="entry name" value="Abhydrolase_6"/>
    <property type="match status" value="1"/>
</dbReference>
<dbReference type="SUPFAM" id="SSF53474">
    <property type="entry name" value="alpha/beta-Hydrolases"/>
    <property type="match status" value="1"/>
</dbReference>
<evidence type="ECO:0000255" key="1">
    <source>
        <dbReference type="HAMAP-Rule" id="MF_01660"/>
    </source>
</evidence>
<keyword id="KW-0456">Lyase</keyword>
<keyword id="KW-0474">Menaquinone biosynthesis</keyword>
<comment type="function">
    <text evidence="1">Catalyzes a proton abstraction reaction that results in 2,5-elimination of pyruvate from 2-succinyl-5-enolpyruvyl-6-hydroxy-3-cyclohexene-1-carboxylate (SEPHCHC) and the formation of 2-succinyl-6-hydroxy-2,4-cyclohexadiene-1-carboxylate (SHCHC).</text>
</comment>
<comment type="catalytic activity">
    <reaction evidence="1">
        <text>5-enolpyruvoyl-6-hydroxy-2-succinyl-cyclohex-3-ene-1-carboxylate = (1R,6R)-6-hydroxy-2-succinyl-cyclohexa-2,4-diene-1-carboxylate + pyruvate</text>
        <dbReference type="Rhea" id="RHEA:25597"/>
        <dbReference type="ChEBI" id="CHEBI:15361"/>
        <dbReference type="ChEBI" id="CHEBI:58689"/>
        <dbReference type="ChEBI" id="CHEBI:58818"/>
        <dbReference type="EC" id="4.2.99.20"/>
    </reaction>
</comment>
<comment type="pathway">
    <text evidence="1">Quinol/quinone metabolism; 1,4-dihydroxy-2-naphthoate biosynthesis; 1,4-dihydroxy-2-naphthoate from chorismate: step 3/7.</text>
</comment>
<comment type="pathway">
    <text evidence="1">Quinol/quinone metabolism; menaquinone biosynthesis.</text>
</comment>
<comment type="subunit">
    <text evidence="1">Monomer.</text>
</comment>
<comment type="similarity">
    <text evidence="1">Belongs to the AB hydrolase superfamily. MenH family.</text>
</comment>
<gene>
    <name evidence="1" type="primary">menH</name>
    <name type="ordered locus">YPTB2559</name>
</gene>
<sequence>MTTLACQKLAPHPESPRHQHAGPWLVWLHGLLGSGQDWLPVAQLCGDYPSLLIDLPGHGQSVSLSADGFADISRQLSQTLQANGIREYWLAGYSLGGRIAIYHACYGRHHGLQGLLVEGGNLGLENAELRQARLQQDRQWAQRFRQEPLPQVLDDWYQQAVFADLDPQQREQLVLLRADNHGTAVAEMLEATSLGHQPWLLPALQRLNVPYTYLCGDRDHKFLQLAQQYRLPLHTLARAGHNAHRANPGAFAAQVLAFLSQSSCLPPSSLSR</sequence>
<proteinExistence type="inferred from homology"/>
<name>MENH_YERPS</name>
<feature type="chain" id="PRO_0000341934" description="2-succinyl-6-hydroxy-2,4-cyclohexadiene-1-carboxylate synthase">
    <location>
        <begin position="1"/>
        <end position="272"/>
    </location>
</feature>
<reference key="1">
    <citation type="journal article" date="2004" name="Proc. Natl. Acad. Sci. U.S.A.">
        <title>Insights into the evolution of Yersinia pestis through whole-genome comparison with Yersinia pseudotuberculosis.</title>
        <authorList>
            <person name="Chain P.S.G."/>
            <person name="Carniel E."/>
            <person name="Larimer F.W."/>
            <person name="Lamerdin J."/>
            <person name="Stoutland P.O."/>
            <person name="Regala W.M."/>
            <person name="Georgescu A.M."/>
            <person name="Vergez L.M."/>
            <person name="Land M.L."/>
            <person name="Motin V.L."/>
            <person name="Brubaker R.R."/>
            <person name="Fowler J."/>
            <person name="Hinnebusch J."/>
            <person name="Marceau M."/>
            <person name="Medigue C."/>
            <person name="Simonet M."/>
            <person name="Chenal-Francisque V."/>
            <person name="Souza B."/>
            <person name="Dacheux D."/>
            <person name="Elliott J.M."/>
            <person name="Derbise A."/>
            <person name="Hauser L.J."/>
            <person name="Garcia E."/>
        </authorList>
    </citation>
    <scope>NUCLEOTIDE SEQUENCE [LARGE SCALE GENOMIC DNA]</scope>
    <source>
        <strain>IP32953</strain>
    </source>
</reference>
<organism>
    <name type="scientific">Yersinia pseudotuberculosis serotype I (strain IP32953)</name>
    <dbReference type="NCBI Taxonomy" id="273123"/>
    <lineage>
        <taxon>Bacteria</taxon>
        <taxon>Pseudomonadati</taxon>
        <taxon>Pseudomonadota</taxon>
        <taxon>Gammaproteobacteria</taxon>
        <taxon>Enterobacterales</taxon>
        <taxon>Yersiniaceae</taxon>
        <taxon>Yersinia</taxon>
    </lineage>
</organism>